<protein>
    <recommendedName>
        <fullName evidence="21">CX3C chemokine receptor 1</fullName>
        <shortName evidence="21">C-X3-C CKR-1</shortName>
        <shortName evidence="21">CX3CR1</shortName>
        <shortName evidence="21">mCX3CR1</shortName>
    </recommendedName>
    <alternativeName>
        <fullName evidence="21">Fractalkine receptor</fullName>
    </alternativeName>
</protein>
<feature type="chain" id="PRO_0000069327" description="CX3C chemokine receptor 1">
    <location>
        <begin position="1"/>
        <end position="354"/>
    </location>
</feature>
<feature type="topological domain" description="Extracellular" evidence="3">
    <location>
        <begin position="1"/>
        <end position="32"/>
    </location>
</feature>
<feature type="transmembrane region" description="Helical; Name=1" evidence="3">
    <location>
        <begin position="33"/>
        <end position="60"/>
    </location>
</feature>
<feature type="topological domain" description="Cytoplasmic" evidence="3">
    <location>
        <begin position="61"/>
        <end position="70"/>
    </location>
</feature>
<feature type="transmembrane region" description="Helical; Name=2" evidence="3">
    <location>
        <begin position="71"/>
        <end position="91"/>
    </location>
</feature>
<feature type="topological domain" description="Extracellular" evidence="3">
    <location>
        <begin position="92"/>
        <end position="104"/>
    </location>
</feature>
<feature type="transmembrane region" description="Helical; Name=3" evidence="3">
    <location>
        <begin position="105"/>
        <end position="126"/>
    </location>
</feature>
<feature type="topological domain" description="Cytoplasmic" evidence="3">
    <location>
        <begin position="127"/>
        <end position="143"/>
    </location>
</feature>
<feature type="transmembrane region" description="Helical; Name=4" evidence="3">
    <location>
        <begin position="144"/>
        <end position="168"/>
    </location>
</feature>
<feature type="topological domain" description="Extracellular" evidence="3">
    <location>
        <begin position="169"/>
        <end position="196"/>
    </location>
</feature>
<feature type="transmembrane region" description="Helical; Name=5" evidence="3">
    <location>
        <begin position="197"/>
        <end position="216"/>
    </location>
</feature>
<feature type="topological domain" description="Cytoplasmic" evidence="3">
    <location>
        <begin position="217"/>
        <end position="232"/>
    </location>
</feature>
<feature type="transmembrane region" description="Helical; Name=6" evidence="3">
    <location>
        <begin position="233"/>
        <end position="257"/>
    </location>
</feature>
<feature type="topological domain" description="Extracellular" evidence="3">
    <location>
        <begin position="258"/>
        <end position="274"/>
    </location>
</feature>
<feature type="transmembrane region" description="Helical; Name=7" evidence="3">
    <location>
        <begin position="275"/>
        <end position="298"/>
    </location>
</feature>
<feature type="topological domain" description="Cytoplasmic" evidence="3">
    <location>
        <begin position="299"/>
        <end position="354"/>
    </location>
</feature>
<feature type="modified residue" description="Phosphothreonine" evidence="22">
    <location>
        <position position="345"/>
    </location>
</feature>
<feature type="disulfide bond" evidence="4">
    <location>
        <begin position="103"/>
        <end position="176"/>
    </location>
</feature>
<feature type="mutagenesis site" description="In DR/NN; abolished activity without affecting avility to bind CX3CL1." evidence="5">
    <original>DR</original>
    <variation>NN</variation>
    <location>
        <begin position="127"/>
        <end position="128"/>
    </location>
</feature>
<feature type="mutagenesis site" description="Abolished activity without affecting avility to bind CX3CL1." evidence="5">
    <original>R</original>
    <variation>N</variation>
    <location>
        <position position="128"/>
    </location>
</feature>
<sequence length="354" mass="40266">MSTSFPELDLENFEYDDSAEACYLGDIVAFGTIFLSVFYALVFTFGLVGNLLVVLALTNSRKPKSITDIYLLNLALSDLLFVATLPFWTHYLISHEGLHNAMCKLTTAFFFIGFFGGIFFITVISIDRYLAIVLAANSMNNRTVQHGVTISLGVWAAAILVASPQFMFTKRKDNECLGDYPEVLQEMWPVLRNSEVNILGFALPLLIMSFCYFRIIQTLFSCKNRKKARAVRLILLVVFAFFLFWTPYNIMIFLETLKFYNFFPSCDMKRDLRLALSVTETVAFSHCCLNPFIYAFAGEKFRRYLGHLYRKCLAVLCGHPVHTGFSPESQRSRQDSILSSFTHYTSEGDGSLLL</sequence>
<gene>
    <name evidence="21" type="primary">Cx3cr1</name>
</gene>
<name>CX3C1_MOUSE</name>
<keyword id="KW-1064">Adaptive immunity</keyword>
<keyword id="KW-1003">Cell membrane</keyword>
<keyword id="KW-1015">Disulfide bond</keyword>
<keyword id="KW-0297">G-protein coupled receptor</keyword>
<keyword id="KW-0391">Immunity</keyword>
<keyword id="KW-0395">Inflammatory response</keyword>
<keyword id="KW-0399">Innate immunity</keyword>
<keyword id="KW-0472">Membrane</keyword>
<keyword id="KW-0597">Phosphoprotein</keyword>
<keyword id="KW-0675">Receptor</keyword>
<keyword id="KW-1185">Reference proteome</keyword>
<keyword id="KW-0807">Transducer</keyword>
<keyword id="KW-0812">Transmembrane</keyword>
<keyword id="KW-1133">Transmembrane helix</keyword>
<comment type="function">
    <text evidence="2 5 7 8 9 10 11 12 13 14 15 16 17 18 19 20">Receptor for the C-X3-C chemokine fractalkine (CX3CL1) present on many early leukocyte cells; CX3CR1-CX3CL1 signaling exerts distinct functions in different tissue compartments, such as immune response, inflammation, cell adhesion and chemotaxis (PubMed:10187784, PubMed:9918795). CX3CR1-CX3CL1 signaling mediates cell migratory functions (PubMed:11544273, PubMed:12871640, PubMed:16675847, PubMed:18322241). Responsible for the recruitment of natural killer (NK) cells to inflamed tissues (PubMed:11544273, PubMed:16675847). Acts as a regulator of inflammation process leading to atherogenesis by mediating macrophage and monocyte recruitment to inflamed atherosclerotic plaques, promoting cell survival (PubMed:12569158, PubMed:18971423). Involved in airway inflammation by promoting interleukin 2-producing T helper (Th2) cell survival in inflamed lung (PubMed:21037587). Involved in the migration of circulating monocytes to non-inflamed tissues, where they differentiate into macrophages and dendritic cells (PubMed:12871640). Acts as a negative regulator of angiogenesis, probably by promoting macrophage chemotaxis (PubMed:18322241). Plays a key role in brain microglia by regulating inflammatory response in the central nervous system (CNS) and regulating synapse maturation (PubMed:16732273, PubMed:21778362, PubMed:24487234). Required to restrain the microglial inflammatory response in the CNS and the resulting parenchymal damage in response to pathological stimuli (PubMed:16732273). Involved in brain development by participating in synaptic pruning, a natural process during which brain microglia eliminates extra synapses during postnatal development (PubMed:21778362). Synaptic pruning by microglia is required to promote the maturation of circuit connectivity during brain development (PubMed:24487234). Acts as an important regulator of the gut microbiota by controlling immunity to intestinal bacteria and fungi (PubMed:15653504, PubMed:29326275). Expressed in lamina propria dendritic cells in the small intestine, which form transepithelial dendrites capable of taking up bacteria in order to provide defense against pathogenic bacteria (PubMed:15653504). Required to initiate innate and adaptive immune responses against dissemination of commensal fungi (mycobiota) component of the gut: expressed in mononuclear phagocytes (MNPs) and acts by promoting induction of antifungal IgG antibodies response to confer protection against disseminated C.albicans or C.auris infection (PubMed:29326275, PubMed:33548172). Also acts as a receptor for C-C motif chemokine CCL26, inducing cell chemotaxis (By similarity).</text>
</comment>
<comment type="subunit">
    <text evidence="2">Found in a ternary complex with CX3CL1 and ITGAV:ITGB3 or ITGA4:ITGB1.</text>
</comment>
<comment type="subcellular location">
    <subcellularLocation>
        <location evidence="5">Cell membrane</location>
        <topology evidence="3">Multi-pass membrane protein</topology>
    </subcellularLocation>
</comment>
<comment type="tissue specificity">
    <text evidence="6 9 10 12">Specifically expressed in subsets of leukocytes: expressed in monocytes, subsets of T-cells and natural killer (NK) cells in the circulation, dendritic cells, as well as in microglia in the central nervous system (CNS) (PubMed:10805752, PubMed:12871640, PubMed:16732273). Expression level subdivides blood monocytes into two major functional subsets; CD14(+)CD16(-)-CX3CR1(low) inflammatory monocytes and CD14(low)CD16(+)CX3CR1(high) homeostatic monocytes (PubMed:12871640). Expressed in myeloid-derived mucosal dendritic cells, which populate the entire lamina propria of the small intestine (PubMed:15653504).</text>
</comment>
<comment type="PTM">
    <text evidence="1">This protein is not N-glycosylated which is unusual for G-protein-coupled receptors.</text>
</comment>
<comment type="disruption phenotype">
    <text evidence="6 8 10 11 12 15 16 17 18">No visible phenotype in normal conditions; mice develop normally and are fertile (PubMed:10805752). Mice lacking both Cx3cr1 and Apoe show decreased atherogenesis (PubMed:12569158). In experimental autoimmune encephalomyelitis (EAE) model mice, recruitment of natural killer (NK) cells in the inflamed central nervous system (CNS) is impaired, leading to increased EAE-related mortality, nonremitting spastic paraplegia and hemorrhagic inflammatory lesions (PubMed:16675847). Mice show an increased microglial inflammatory response and neuronal death in several models of CNS insult (PubMed:16732273). Mice display reduced airway inflammation in lung after allergen sensitization (PubMed:21037587). Mice display a transient decrease in microglia density, leading to synaptic deficits characterized by an excess of weak excitatory synapses: defects are caused by a failure to eliminate immature synaptic connections during the second and third postnatal weeks (PubMed:21778362). Deficient synaptic pruning is associated with weak synaptic transmission, decreased functional brain connectivity, deficits in social interaction and increased repetitive-behavior phenotypes (PubMed:24487234). Defects of lamina propria dendritic cells are observed, leading to impair the sampling of bacteria from the intestinal lumen and affect their ability to take up invasive pathogens (PubMed:15653504). Mice are more susceptible to severe colitis that is rescued by antifungal treatment and display changes in gut fungal communities (PubMed:29326275).</text>
</comment>
<comment type="similarity">
    <text evidence="4">Belongs to the G-protein coupled receptor 1 family.</text>
</comment>
<evidence type="ECO:0000250" key="1">
    <source>
        <dbReference type="UniProtKB" id="P35411"/>
    </source>
</evidence>
<evidence type="ECO:0000250" key="2">
    <source>
        <dbReference type="UniProtKB" id="P49238"/>
    </source>
</evidence>
<evidence type="ECO:0000255" key="3"/>
<evidence type="ECO:0000255" key="4">
    <source>
        <dbReference type="PROSITE-ProRule" id="PRU00521"/>
    </source>
</evidence>
<evidence type="ECO:0000269" key="5">
    <source>
    </source>
</evidence>
<evidence type="ECO:0000269" key="6">
    <source>
    </source>
</evidence>
<evidence type="ECO:0000269" key="7">
    <source>
    </source>
</evidence>
<evidence type="ECO:0000269" key="8">
    <source>
    </source>
</evidence>
<evidence type="ECO:0000269" key="9">
    <source>
    </source>
</evidence>
<evidence type="ECO:0000269" key="10">
    <source>
    </source>
</evidence>
<evidence type="ECO:0000269" key="11">
    <source>
    </source>
</evidence>
<evidence type="ECO:0000269" key="12">
    <source>
    </source>
</evidence>
<evidence type="ECO:0000269" key="13">
    <source>
    </source>
</evidence>
<evidence type="ECO:0000269" key="14">
    <source>
    </source>
</evidence>
<evidence type="ECO:0000269" key="15">
    <source>
    </source>
</evidence>
<evidence type="ECO:0000269" key="16">
    <source>
    </source>
</evidence>
<evidence type="ECO:0000269" key="17">
    <source>
    </source>
</evidence>
<evidence type="ECO:0000269" key="18">
    <source>
    </source>
</evidence>
<evidence type="ECO:0000269" key="19">
    <source>
    </source>
</evidence>
<evidence type="ECO:0000269" key="20">
    <source>
    </source>
</evidence>
<evidence type="ECO:0000303" key="21">
    <source>
    </source>
</evidence>
<evidence type="ECO:0007744" key="22">
    <source>
    </source>
</evidence>
<accession>Q9Z0D9</accession>
<dbReference type="EMBL" id="AF074912">
    <property type="protein sequence ID" value="AAD08665.1"/>
    <property type="molecule type" value="Genomic_DNA"/>
</dbReference>
<dbReference type="EMBL" id="AF102269">
    <property type="protein sequence ID" value="AAC72408.1"/>
    <property type="molecule type" value="mRNA"/>
</dbReference>
<dbReference type="EMBL" id="BC012653">
    <property type="protein sequence ID" value="AAH12653.1"/>
    <property type="molecule type" value="mRNA"/>
</dbReference>
<dbReference type="CCDS" id="CCDS40806.1"/>
<dbReference type="RefSeq" id="NP_034117.3">
    <property type="nucleotide sequence ID" value="NM_009987.4"/>
</dbReference>
<dbReference type="SMR" id="Q9Z0D9"/>
<dbReference type="FunCoup" id="Q9Z0D9">
    <property type="interactions" value="381"/>
</dbReference>
<dbReference type="STRING" id="10090.ENSMUSP00000150463"/>
<dbReference type="iPTMnet" id="Q9Z0D9"/>
<dbReference type="PhosphoSitePlus" id="Q9Z0D9"/>
<dbReference type="SwissPalm" id="Q9Z0D9"/>
<dbReference type="PaxDb" id="10090-ENSMUSP00000063986"/>
<dbReference type="ProteomicsDB" id="285403"/>
<dbReference type="Antibodypedia" id="6554">
    <property type="antibodies" value="780 antibodies from 45 providers"/>
</dbReference>
<dbReference type="DNASU" id="13051"/>
<dbReference type="Ensembl" id="ENSMUST00000064165.5">
    <property type="protein sequence ID" value="ENSMUSP00000063986.4"/>
    <property type="gene ID" value="ENSMUSG00000052336.9"/>
</dbReference>
<dbReference type="Ensembl" id="ENSMUST00000215016.2">
    <property type="protein sequence ID" value="ENSMUSP00000150463.2"/>
    <property type="gene ID" value="ENSMUSG00000052336.9"/>
</dbReference>
<dbReference type="GeneID" id="13051"/>
<dbReference type="KEGG" id="mmu:13051"/>
<dbReference type="UCSC" id="uc009sbz.2">
    <property type="organism name" value="mouse"/>
</dbReference>
<dbReference type="AGR" id="MGI:1333815"/>
<dbReference type="CTD" id="1524"/>
<dbReference type="MGI" id="MGI:1333815">
    <property type="gene designation" value="Cx3cr1"/>
</dbReference>
<dbReference type="VEuPathDB" id="HostDB:ENSMUSG00000052336"/>
<dbReference type="eggNOG" id="ENOG502QVQK">
    <property type="taxonomic scope" value="Eukaryota"/>
</dbReference>
<dbReference type="GeneTree" id="ENSGT01020000230359"/>
<dbReference type="HOGENOM" id="CLU_009579_8_3_1"/>
<dbReference type="InParanoid" id="Q9Z0D9"/>
<dbReference type="OMA" id="TDIQEFG"/>
<dbReference type="OrthoDB" id="56035at9989"/>
<dbReference type="PhylomeDB" id="Q9Z0D9"/>
<dbReference type="TreeFam" id="TF330966"/>
<dbReference type="Reactome" id="R-MMU-380108">
    <property type="pathway name" value="Chemokine receptors bind chemokines"/>
</dbReference>
<dbReference type="Reactome" id="R-MMU-418594">
    <property type="pathway name" value="G alpha (i) signalling events"/>
</dbReference>
<dbReference type="BioGRID-ORCS" id="13051">
    <property type="hits" value="3 hits in 76 CRISPR screens"/>
</dbReference>
<dbReference type="ChiTaRS" id="Cx3cr1">
    <property type="organism name" value="mouse"/>
</dbReference>
<dbReference type="PRO" id="PR:Q9Z0D9"/>
<dbReference type="Proteomes" id="UP000000589">
    <property type="component" value="Chromosome 9"/>
</dbReference>
<dbReference type="RNAct" id="Q9Z0D9">
    <property type="molecule type" value="protein"/>
</dbReference>
<dbReference type="Bgee" id="ENSMUSG00000052336">
    <property type="expression patterns" value="Expressed in lumbar subsegment of spinal cord and 177 other cell types or tissues"/>
</dbReference>
<dbReference type="ExpressionAtlas" id="Q9Z0D9">
    <property type="expression patterns" value="baseline and differential"/>
</dbReference>
<dbReference type="GO" id="GO:0009986">
    <property type="term" value="C:cell surface"/>
    <property type="evidence" value="ECO:0000314"/>
    <property type="project" value="ARUK-UCL"/>
</dbReference>
<dbReference type="GO" id="GO:0005886">
    <property type="term" value="C:plasma membrane"/>
    <property type="evidence" value="ECO:0007669"/>
    <property type="project" value="UniProtKB-SubCell"/>
</dbReference>
<dbReference type="GO" id="GO:0019960">
    <property type="term" value="F:C-X3-C chemokine binding"/>
    <property type="evidence" value="ECO:0000353"/>
    <property type="project" value="ARUK-UCL"/>
</dbReference>
<dbReference type="GO" id="GO:0016495">
    <property type="term" value="F:C-X3-C chemokine receptor activity"/>
    <property type="evidence" value="ECO:0000314"/>
    <property type="project" value="UniProtKB"/>
</dbReference>
<dbReference type="GO" id="GO:0031737">
    <property type="term" value="F:CX3C chemokine receptor binding"/>
    <property type="evidence" value="ECO:0007669"/>
    <property type="project" value="Ensembl"/>
</dbReference>
<dbReference type="GO" id="GO:0004896">
    <property type="term" value="F:cytokine receptor activity"/>
    <property type="evidence" value="ECO:0000315"/>
    <property type="project" value="MGI"/>
</dbReference>
<dbReference type="GO" id="GO:0004930">
    <property type="term" value="F:G protein-coupled receptor activity"/>
    <property type="evidence" value="ECO:0000315"/>
    <property type="project" value="ARUK-UCL"/>
</dbReference>
<dbReference type="GO" id="GO:0002250">
    <property type="term" value="P:adaptive immune response"/>
    <property type="evidence" value="ECO:0000315"/>
    <property type="project" value="UniProtKB"/>
</dbReference>
<dbReference type="GO" id="GO:0061760">
    <property type="term" value="P:antifungal innate immune response"/>
    <property type="evidence" value="ECO:0000315"/>
    <property type="project" value="UniProtKB"/>
</dbReference>
<dbReference type="GO" id="GO:0007420">
    <property type="term" value="P:brain development"/>
    <property type="evidence" value="ECO:0000315"/>
    <property type="project" value="UniProtKB"/>
</dbReference>
<dbReference type="GO" id="GO:0007155">
    <property type="term" value="P:cell adhesion"/>
    <property type="evidence" value="ECO:0000353"/>
    <property type="project" value="ARUK-UCL"/>
</dbReference>
<dbReference type="GO" id="GO:0071222">
    <property type="term" value="P:cellular response to lipopolysaccharide"/>
    <property type="evidence" value="ECO:0000316"/>
    <property type="project" value="ARUK-UCL"/>
</dbReference>
<dbReference type="GO" id="GO:0021626">
    <property type="term" value="P:central nervous system maturation"/>
    <property type="evidence" value="ECO:0000315"/>
    <property type="project" value="ARUK-UCL"/>
</dbReference>
<dbReference type="GO" id="GO:0021795">
    <property type="term" value="P:cerebral cortex cell migration"/>
    <property type="evidence" value="ECO:0000315"/>
    <property type="project" value="MGI"/>
</dbReference>
<dbReference type="GO" id="GO:0019221">
    <property type="term" value="P:cytokine-mediated signaling pathway"/>
    <property type="evidence" value="ECO:0000315"/>
    <property type="project" value="MGI"/>
</dbReference>
<dbReference type="GO" id="GO:0048874">
    <property type="term" value="P:host-mediated regulation of intestinal microbiota composition"/>
    <property type="evidence" value="ECO:0000315"/>
    <property type="project" value="UniProtKB"/>
</dbReference>
<dbReference type="GO" id="GO:0006955">
    <property type="term" value="P:immune response"/>
    <property type="evidence" value="ECO:0000315"/>
    <property type="project" value="UniProtKB"/>
</dbReference>
<dbReference type="GO" id="GO:0045087">
    <property type="term" value="P:innate immune response"/>
    <property type="evidence" value="ECO:0000305"/>
    <property type="project" value="ARUK-UCL"/>
</dbReference>
<dbReference type="GO" id="GO:0030595">
    <property type="term" value="P:leukocyte chemotaxis"/>
    <property type="evidence" value="ECO:0000315"/>
    <property type="project" value="UniProtKB"/>
</dbReference>
<dbReference type="GO" id="GO:0050901">
    <property type="term" value="P:leukocyte tethering or rolling"/>
    <property type="evidence" value="ECO:0000316"/>
    <property type="project" value="ARUK-UCL"/>
</dbReference>
<dbReference type="GO" id="GO:0048246">
    <property type="term" value="P:macrophage chemotaxis"/>
    <property type="evidence" value="ECO:0000315"/>
    <property type="project" value="MGI"/>
</dbReference>
<dbReference type="GO" id="GO:0002282">
    <property type="term" value="P:microglial cell activation involved in immune response"/>
    <property type="evidence" value="ECO:0000315"/>
    <property type="project" value="MGI"/>
</dbReference>
<dbReference type="GO" id="GO:1904124">
    <property type="term" value="P:microglial cell migration"/>
    <property type="evidence" value="ECO:0000315"/>
    <property type="project" value="MGI"/>
</dbReference>
<dbReference type="GO" id="GO:0050804">
    <property type="term" value="P:modulation of chemical synaptic transmission"/>
    <property type="evidence" value="ECO:0000315"/>
    <property type="project" value="ARUK-UCL"/>
</dbReference>
<dbReference type="GO" id="GO:0150090">
    <property type="term" value="P:multiple spine synapse organization, single dendrite"/>
    <property type="evidence" value="ECO:0000315"/>
    <property type="project" value="ARUK-UCL"/>
</dbReference>
<dbReference type="GO" id="GO:0016525">
    <property type="term" value="P:negative regulation of angiogenesis"/>
    <property type="evidence" value="ECO:0000315"/>
    <property type="project" value="MGI"/>
</dbReference>
<dbReference type="GO" id="GO:2001240">
    <property type="term" value="P:negative regulation of extrinsic apoptotic signaling pathway in absence of ligand"/>
    <property type="evidence" value="ECO:0000315"/>
    <property type="project" value="MGI"/>
</dbReference>
<dbReference type="GO" id="GO:1904150">
    <property type="term" value="P:negative regulation of microglial cell mediated cytotoxicity"/>
    <property type="evidence" value="ECO:0000315"/>
    <property type="project" value="UniProtKB"/>
</dbReference>
<dbReference type="GO" id="GO:0007200">
    <property type="term" value="P:phospholipase C-activating G protein-coupled receptor signaling pathway"/>
    <property type="evidence" value="ECO:0000315"/>
    <property type="project" value="ARUK-UCL"/>
</dbReference>
<dbReference type="GO" id="GO:0090026">
    <property type="term" value="P:positive regulation of monocyte chemotaxis"/>
    <property type="evidence" value="ECO:0000315"/>
    <property type="project" value="UniProtKB"/>
</dbReference>
<dbReference type="GO" id="GO:0050769">
    <property type="term" value="P:positive regulation of neurogenesis"/>
    <property type="evidence" value="ECO:0000315"/>
    <property type="project" value="ARUK-UCL"/>
</dbReference>
<dbReference type="GO" id="GO:0045428">
    <property type="term" value="P:regulation of nitric oxide biosynthetic process"/>
    <property type="evidence" value="ECO:0000316"/>
    <property type="project" value="ARUK-UCL"/>
</dbReference>
<dbReference type="GO" id="GO:0032680">
    <property type="term" value="P:regulation of tumor necrosis factor production"/>
    <property type="evidence" value="ECO:0000316"/>
    <property type="project" value="ARUK-UCL"/>
</dbReference>
<dbReference type="GO" id="GO:0035176">
    <property type="term" value="P:social behavior"/>
    <property type="evidence" value="ECO:0000315"/>
    <property type="project" value="ARUK-UCL"/>
</dbReference>
<dbReference type="GO" id="GO:0060074">
    <property type="term" value="P:synapse maturation"/>
    <property type="evidence" value="ECO:0000315"/>
    <property type="project" value="ARUK-UCL"/>
</dbReference>
<dbReference type="GO" id="GO:0098883">
    <property type="term" value="P:synapse pruning"/>
    <property type="evidence" value="ECO:0000315"/>
    <property type="project" value="UniProtKB"/>
</dbReference>
<dbReference type="CDD" id="cd15186">
    <property type="entry name" value="7tmA_CX3CR1"/>
    <property type="match status" value="1"/>
</dbReference>
<dbReference type="FunFam" id="1.20.1070.10:FF:000026">
    <property type="entry name" value="C-C chemokine receptor type 5"/>
    <property type="match status" value="1"/>
</dbReference>
<dbReference type="Gene3D" id="1.20.1070.10">
    <property type="entry name" value="Rhodopsin 7-helix transmembrane proteins"/>
    <property type="match status" value="1"/>
</dbReference>
<dbReference type="InterPro" id="IPR050119">
    <property type="entry name" value="CCR1-9-like"/>
</dbReference>
<dbReference type="InterPro" id="IPR005387">
    <property type="entry name" value="Chemokine_CX3CR1"/>
</dbReference>
<dbReference type="InterPro" id="IPR000276">
    <property type="entry name" value="GPCR_Rhodpsn"/>
</dbReference>
<dbReference type="InterPro" id="IPR017452">
    <property type="entry name" value="GPCR_Rhodpsn_7TM"/>
</dbReference>
<dbReference type="PANTHER" id="PTHR10489">
    <property type="entry name" value="CELL ADHESION MOLECULE"/>
    <property type="match status" value="1"/>
</dbReference>
<dbReference type="PANTHER" id="PTHR10489:SF955">
    <property type="entry name" value="CX3C CHEMOKINE RECEPTOR 1"/>
    <property type="match status" value="1"/>
</dbReference>
<dbReference type="Pfam" id="PF00001">
    <property type="entry name" value="7tm_1"/>
    <property type="match status" value="1"/>
</dbReference>
<dbReference type="PRINTS" id="PR01562">
    <property type="entry name" value="FRACTALKINER"/>
</dbReference>
<dbReference type="PRINTS" id="PR00237">
    <property type="entry name" value="GPCRRHODOPSN"/>
</dbReference>
<dbReference type="SUPFAM" id="SSF81321">
    <property type="entry name" value="Family A G protein-coupled receptor-like"/>
    <property type="match status" value="1"/>
</dbReference>
<dbReference type="PROSITE" id="PS00237">
    <property type="entry name" value="G_PROTEIN_RECEP_F1_1"/>
    <property type="match status" value="1"/>
</dbReference>
<dbReference type="PROSITE" id="PS50262">
    <property type="entry name" value="G_PROTEIN_RECEP_F1_2"/>
    <property type="match status" value="1"/>
</dbReference>
<proteinExistence type="evidence at protein level"/>
<organism>
    <name type="scientific">Mus musculus</name>
    <name type="common">Mouse</name>
    <dbReference type="NCBI Taxonomy" id="10090"/>
    <lineage>
        <taxon>Eukaryota</taxon>
        <taxon>Metazoa</taxon>
        <taxon>Chordata</taxon>
        <taxon>Craniata</taxon>
        <taxon>Vertebrata</taxon>
        <taxon>Euteleostomi</taxon>
        <taxon>Mammalia</taxon>
        <taxon>Eutheria</taxon>
        <taxon>Euarchontoglires</taxon>
        <taxon>Glires</taxon>
        <taxon>Rodentia</taxon>
        <taxon>Myomorpha</taxon>
        <taxon>Muroidea</taxon>
        <taxon>Muridae</taxon>
        <taxon>Murinae</taxon>
        <taxon>Mus</taxon>
        <taxon>Mus</taxon>
    </lineage>
</organism>
<reference key="1">
    <citation type="journal article" date="1998" name="Biochem. Biophys. Res. Commun.">
        <title>Gene cloning, RNA distribution, and functional expression of mCX3CR1, a mouse chemotactic receptor for the CX3C chemokine fractalkine.</title>
        <authorList>
            <person name="Combadiere C."/>
            <person name="Gao J.-L."/>
            <person name="Tiffany H.L."/>
            <person name="Murphy P.M."/>
        </authorList>
    </citation>
    <scope>NUCLEOTIDE SEQUENCE [GENOMIC DNA]</scope>
    <scope>FUNCTION</scope>
    <source>
        <strain>129/Sv</strain>
    </source>
</reference>
<reference key="2">
    <citation type="submission" date="1998-10" db="EMBL/GenBank/DDBJ databases">
        <title>Cloning and characterization of murine CX3CR1, a receptor for murine fractalkine/neurotactin.</title>
        <authorList>
            <person name="Coultas L."/>
            <person name="McColl S.R."/>
        </authorList>
    </citation>
    <scope>NUCLEOTIDE SEQUENCE [MRNA]</scope>
    <source>
        <strain>129/SvJ</strain>
    </source>
</reference>
<reference key="3">
    <citation type="journal article" date="2004" name="Genome Res.">
        <title>The status, quality, and expansion of the NIH full-length cDNA project: the Mammalian Gene Collection (MGC).</title>
        <authorList>
            <consortium name="The MGC Project Team"/>
        </authorList>
    </citation>
    <scope>NUCLEOTIDE SEQUENCE [LARGE SCALE MRNA]</scope>
    <source>
        <strain>Czech II</strain>
        <tissue>Mammary gland</tissue>
    </source>
</reference>
<reference key="4">
    <citation type="journal article" date="1999" name="J. Biol. Chem.">
        <title>Molecular uncoupling of fractalkine-mediated cell adhesion and signal transduction. Rapid flow arrest of CX3CR1-expressing cells is independent of G-protein activation.</title>
        <authorList>
            <person name="Haskell C.A."/>
            <person name="Cleary M.D."/>
            <person name="Charo I.F."/>
        </authorList>
    </citation>
    <scope>FUNCTION</scope>
    <scope>SUBCELLULAR LOCATION</scope>
    <scope>MUTAGENESIS OF 127-ASP-ARG-128 AND ARG-128</scope>
</reference>
<reference key="5">
    <citation type="journal article" date="2000" name="Mol. Cell. Biol.">
        <title>Analysis of fractalkine receptor CX(3)CR1 function by targeted deletion and green fluorescent protein reporter gene insertion.</title>
        <authorList>
            <person name="Jung S."/>
            <person name="Aliberti J."/>
            <person name="Graemmel P."/>
            <person name="Sunshine M.J."/>
            <person name="Kreutzberg G.W."/>
            <person name="Sher A."/>
            <person name="Littman D.R."/>
        </authorList>
    </citation>
    <scope>TISSUE SPECIFICITY</scope>
    <scope>DISRUPTION PHENOTYPE</scope>
</reference>
<reference key="6">
    <citation type="journal article" date="2001" name="J. Clin. Invest.">
        <title>Targeted deletion of CX(3)CR1 reveals a role for fractalkine in cardiac allograft rejection.</title>
        <authorList>
            <person name="Haskell C.A."/>
            <person name="Hancock W.W."/>
            <person name="Salant D.J."/>
            <person name="Gao W."/>
            <person name="Csizmadia V."/>
            <person name="Peters W."/>
            <person name="Faia K."/>
            <person name="Fituri O."/>
            <person name="Rottman J.B."/>
            <person name="Charo I.F."/>
        </authorList>
    </citation>
    <scope>FUNCTION</scope>
</reference>
<reference key="7">
    <citation type="journal article" date="2003" name="Immunity">
        <title>Blood monocytes consist of two principal subsets with distinct migratory properties.</title>
        <authorList>
            <person name="Geissmann F."/>
            <person name="Jung S."/>
            <person name="Littman D.R."/>
        </authorList>
    </citation>
    <scope>FUNCTION</scope>
    <scope>TISSUE SPECIFICITY</scope>
</reference>
<reference key="8">
    <citation type="journal article" date="2003" name="J. Clin. Invest.">
        <title>Decreased atherosclerosis in CX3CR1-/- mice reveals a role for fractalkine in atherogenesis.</title>
        <authorList>
            <person name="Lesnik P."/>
            <person name="Haskell C.A."/>
            <person name="Charo I.F."/>
        </authorList>
    </citation>
    <scope>FUNCTION</scope>
    <scope>DISRUPTION PHENOTYPE</scope>
</reference>
<reference key="9">
    <citation type="journal article" date="2005" name="Science">
        <title>CX3CR1-mediated dendritic cell access to the intestinal lumen and bacterial clearance.</title>
        <authorList>
            <person name="Niess J.H."/>
            <person name="Brand S."/>
            <person name="Gu X."/>
            <person name="Landsman L."/>
            <person name="Jung S."/>
            <person name="McCormick B.A."/>
            <person name="Vyas J.M."/>
            <person name="Boes M."/>
            <person name="Ploegh H.L."/>
            <person name="Fox J.G."/>
            <person name="Littman D.R."/>
            <person name="Reinecker H.C."/>
        </authorList>
    </citation>
    <scope>FUNCTION</scope>
    <scope>TISSUE SPECIFICITY</scope>
    <scope>DISRUPTION PHENOTYPE</scope>
</reference>
<reference key="10">
    <citation type="journal article" date="2006" name="FASEB J.">
        <title>The neuronal chemokine CX3CL1/fractalkine selectively recruits NK cells that modify experimental autoimmune encephalomyelitis within the central nervous system.</title>
        <authorList>
            <person name="Huang D."/>
            <person name="Shi F.D."/>
            <person name="Jung S."/>
            <person name="Pien G.C."/>
            <person name="Wang J."/>
            <person name="Salazar-Mather T.P."/>
            <person name="He T.T."/>
            <person name="Weaver J.T."/>
            <person name="Ljunggren H.G."/>
            <person name="Biron C.A."/>
            <person name="Littman D.R."/>
            <person name="Ransohoff R.M."/>
        </authorList>
    </citation>
    <scope>FUNCTION</scope>
    <scope>DISRUPTION PHENOTYPE</scope>
</reference>
<reference key="11">
    <citation type="journal article" date="2006" name="Nat. Neurosci.">
        <title>Control of microglial neurotoxicity by the fractalkine receptor.</title>
        <authorList>
            <person name="Cardona A.E."/>
            <person name="Pioro E.P."/>
            <person name="Sasse M.E."/>
            <person name="Kostenko V."/>
            <person name="Cardona S.M."/>
            <person name="Dijkstra I.M."/>
            <person name="Huang D."/>
            <person name="Kidd G."/>
            <person name="Dombrowski S."/>
            <person name="Dutta R."/>
            <person name="Lee J.C."/>
            <person name="Cook D.N."/>
            <person name="Jung S."/>
            <person name="Lira S.A."/>
            <person name="Littman D.R."/>
            <person name="Ransohoff R.M."/>
        </authorList>
    </citation>
    <scope>FUNCTION</scope>
    <scope>TISSUE SPECIFICITY</scope>
    <scope>DISRUPTION PHENOTYPE</scope>
</reference>
<reference key="12">
    <citation type="journal article" date="2008" name="J. Immunol.">
        <title>Protective roles of the fractalkine/CX3CL1-CX3CR1 interactions in alkali-induced corneal neovascularization through enhanced antiangiogenic factor expression.</title>
        <authorList>
            <person name="Lu P."/>
            <person name="Li L."/>
            <person name="Kuno K."/>
            <person name="Wu Y."/>
            <person name="Baba T."/>
            <person name="Li Y.Y."/>
            <person name="Zhang X."/>
            <person name="Mukaida N."/>
        </authorList>
    </citation>
    <scope>FUNCTION</scope>
</reference>
<reference key="13">
    <citation type="journal article" date="2009" name="Blood">
        <title>CX3CR1 is required for monocyte homeostasis and atherogenesis by promoting cell survival.</title>
        <authorList>
            <person name="Landsman L."/>
            <person name="Bar-On L."/>
            <person name="Zernecke A."/>
            <person name="Kim K.W."/>
            <person name="Krauthgamer R."/>
            <person name="Shagdarsuren E."/>
            <person name="Lira S.A."/>
            <person name="Weissman I.L."/>
            <person name="Weber C."/>
            <person name="Jung S."/>
        </authorList>
    </citation>
    <scope>FUNCTION</scope>
</reference>
<reference key="14">
    <citation type="journal article" date="2010" name="Cell">
        <title>A tissue-specific atlas of mouse protein phosphorylation and expression.</title>
        <authorList>
            <person name="Huttlin E.L."/>
            <person name="Jedrychowski M.P."/>
            <person name="Elias J.E."/>
            <person name="Goswami T."/>
            <person name="Rad R."/>
            <person name="Beausoleil S.A."/>
            <person name="Villen J."/>
            <person name="Haas W."/>
            <person name="Sowa M.E."/>
            <person name="Gygi S.P."/>
        </authorList>
    </citation>
    <scope>PHOSPHORYLATION [LARGE SCALE ANALYSIS] AT THR-345</scope>
    <scope>IDENTIFICATION BY MASS SPECTROMETRY [LARGE SCALE ANALYSIS]</scope>
    <source>
        <tissue>Brain</tissue>
    </source>
</reference>
<reference key="15">
    <citation type="journal article" date="2010" name="Nat. Med.">
        <title>CX3CR1 is required for airway inflammation by promoting T helper cell survival and maintenance in inflamed lung.</title>
        <authorList>
            <person name="Mionnet C."/>
            <person name="Buatois V."/>
            <person name="Kanda A."/>
            <person name="Milcent V."/>
            <person name="Fleury S."/>
            <person name="Lair D."/>
            <person name="Langelot M."/>
            <person name="Lacoeuille Y."/>
            <person name="Hessel E."/>
            <person name="Coffman R."/>
            <person name="Magnan A."/>
            <person name="Dombrowicz D."/>
            <person name="Glaichenhaus N."/>
            <person name="Julia V."/>
        </authorList>
    </citation>
    <scope>FUNCTION</scope>
</reference>
<reference key="16">
    <citation type="journal article" date="2011" name="Science">
        <title>Synaptic pruning by microglia is necessary for normal brain development.</title>
        <authorList>
            <person name="Paolicelli R.C."/>
            <person name="Bolasco G."/>
            <person name="Pagani F."/>
            <person name="Maggi L."/>
            <person name="Scianni M."/>
            <person name="Panzanelli P."/>
            <person name="Giustetto M."/>
            <person name="Ferreira T.A."/>
            <person name="Guiducci E."/>
            <person name="Dumas L."/>
            <person name="Ragozzino D."/>
            <person name="Gross C.T."/>
        </authorList>
    </citation>
    <scope>FUNCTION</scope>
    <scope>DISRUPTION PHENOTYPE</scope>
</reference>
<reference key="17">
    <citation type="journal article" date="2014" name="Nat. Neurosci.">
        <title>Deficient neuron-microglia signaling results in impaired functional brain connectivity and social behavior.</title>
        <authorList>
            <person name="Zhan Y."/>
            <person name="Paolicelli R.C."/>
            <person name="Sforazzini F."/>
            <person name="Weinhard L."/>
            <person name="Bolasco G."/>
            <person name="Pagani F."/>
            <person name="Vyssotski A.L."/>
            <person name="Bifone A."/>
            <person name="Gozzi A."/>
            <person name="Ragozzino D."/>
            <person name="Gross C.T."/>
        </authorList>
    </citation>
    <scope>FUNCTION</scope>
    <scope>DISRUPTION PHENOTYPE</scope>
</reference>
<reference key="18">
    <citation type="journal article" date="2018" name="Science">
        <title>CX3CR1+ mononuclear phagocytes control immunity to intestinal fungi.</title>
        <authorList>
            <person name="Leonardi I."/>
            <person name="Li X."/>
            <person name="Semon A."/>
            <person name="Li D."/>
            <person name="Doron I."/>
            <person name="Putzel G."/>
            <person name="Bar A."/>
            <person name="Prieto D."/>
            <person name="Rescigno M."/>
            <person name="McGovern D.P.B."/>
            <person name="Pla J."/>
            <person name="Iliev I.D."/>
        </authorList>
    </citation>
    <scope>FUNCTION</scope>
    <scope>DISRUPTION PHENOTYPE</scope>
</reference>
<reference key="19">
    <citation type="journal article" date="2021" name="Cell">
        <title>Human gut mycobiota tune immunity via CARD9-dependent induction of anti-fungal IgG antibodies.</title>
        <authorList>
            <person name="Doron I."/>
            <person name="Leonardi I."/>
            <person name="Li X.V."/>
            <person name="Fiers W.D."/>
            <person name="Semon A."/>
            <person name="Bialt-DeCelie M."/>
            <person name="Migaud M."/>
            <person name="Gao I.H."/>
            <person name="Lin W.Y."/>
            <person name="Kusakabe T."/>
            <person name="Puel A."/>
            <person name="Iliev I.D."/>
        </authorList>
    </citation>
    <scope>FUNCTION</scope>
</reference>